<keyword id="KW-0067">ATP-binding</keyword>
<keyword id="KW-0963">Cytoplasm</keyword>
<keyword id="KW-0418">Kinase</keyword>
<keyword id="KW-0545">Nucleotide biosynthesis</keyword>
<keyword id="KW-0547">Nucleotide-binding</keyword>
<keyword id="KW-0808">Transferase</keyword>
<name>KAD_SHEPC</name>
<sequence length="214" mass="23098">MRIILLGAPGAGKGTQAQFIMEQYGIPQISTGDMLRAAVKAGTPLGLEAKKVMDAGQLVSDDLIIGLVKERIAQDDCAKGFLLDGFPRTIPQADAMAANGISIDHVIEIDVPDEEIVKRMSGRRVHPGSGRVYHVVFNPPKVEGKDDVTGEDLAIRPDDEEATVRKRLAIYHEQTKPLVEYYGKVAAAGQTKYNKFDGTQSVAAVSEQLASVLK</sequence>
<accession>A4Y7T5</accession>
<organism>
    <name type="scientific">Shewanella putrefaciens (strain CN-32 / ATCC BAA-453)</name>
    <dbReference type="NCBI Taxonomy" id="319224"/>
    <lineage>
        <taxon>Bacteria</taxon>
        <taxon>Pseudomonadati</taxon>
        <taxon>Pseudomonadota</taxon>
        <taxon>Gammaproteobacteria</taxon>
        <taxon>Alteromonadales</taxon>
        <taxon>Shewanellaceae</taxon>
        <taxon>Shewanella</taxon>
    </lineage>
</organism>
<dbReference type="EC" id="2.7.4.3" evidence="1"/>
<dbReference type="EMBL" id="CP000681">
    <property type="protein sequence ID" value="ABP76018.1"/>
    <property type="molecule type" value="Genomic_DNA"/>
</dbReference>
<dbReference type="SMR" id="A4Y7T5"/>
<dbReference type="STRING" id="319224.Sputcn32_2297"/>
<dbReference type="KEGG" id="spc:Sputcn32_2297"/>
<dbReference type="eggNOG" id="COG0563">
    <property type="taxonomic scope" value="Bacteria"/>
</dbReference>
<dbReference type="HOGENOM" id="CLU_032354_1_2_6"/>
<dbReference type="UniPathway" id="UPA00588">
    <property type="reaction ID" value="UER00649"/>
</dbReference>
<dbReference type="GO" id="GO:0005737">
    <property type="term" value="C:cytoplasm"/>
    <property type="evidence" value="ECO:0007669"/>
    <property type="project" value="UniProtKB-SubCell"/>
</dbReference>
<dbReference type="GO" id="GO:0004017">
    <property type="term" value="F:adenylate kinase activity"/>
    <property type="evidence" value="ECO:0007669"/>
    <property type="project" value="UniProtKB-UniRule"/>
</dbReference>
<dbReference type="GO" id="GO:0005524">
    <property type="term" value="F:ATP binding"/>
    <property type="evidence" value="ECO:0007669"/>
    <property type="project" value="UniProtKB-UniRule"/>
</dbReference>
<dbReference type="GO" id="GO:0044209">
    <property type="term" value="P:AMP salvage"/>
    <property type="evidence" value="ECO:0007669"/>
    <property type="project" value="UniProtKB-UniRule"/>
</dbReference>
<dbReference type="CDD" id="cd01428">
    <property type="entry name" value="ADK"/>
    <property type="match status" value="1"/>
</dbReference>
<dbReference type="FunFam" id="3.40.50.300:FF:000106">
    <property type="entry name" value="Adenylate kinase mitochondrial"/>
    <property type="match status" value="1"/>
</dbReference>
<dbReference type="Gene3D" id="3.40.50.300">
    <property type="entry name" value="P-loop containing nucleotide triphosphate hydrolases"/>
    <property type="match status" value="1"/>
</dbReference>
<dbReference type="HAMAP" id="MF_00235">
    <property type="entry name" value="Adenylate_kinase_Adk"/>
    <property type="match status" value="1"/>
</dbReference>
<dbReference type="InterPro" id="IPR006259">
    <property type="entry name" value="Adenyl_kin_sub"/>
</dbReference>
<dbReference type="InterPro" id="IPR000850">
    <property type="entry name" value="Adenylat/UMP-CMP_kin"/>
</dbReference>
<dbReference type="InterPro" id="IPR033690">
    <property type="entry name" value="Adenylat_kinase_CS"/>
</dbReference>
<dbReference type="InterPro" id="IPR007862">
    <property type="entry name" value="Adenylate_kinase_lid-dom"/>
</dbReference>
<dbReference type="InterPro" id="IPR027417">
    <property type="entry name" value="P-loop_NTPase"/>
</dbReference>
<dbReference type="NCBIfam" id="TIGR01351">
    <property type="entry name" value="adk"/>
    <property type="match status" value="1"/>
</dbReference>
<dbReference type="NCBIfam" id="NF001379">
    <property type="entry name" value="PRK00279.1-1"/>
    <property type="match status" value="1"/>
</dbReference>
<dbReference type="NCBIfam" id="NF001380">
    <property type="entry name" value="PRK00279.1-2"/>
    <property type="match status" value="1"/>
</dbReference>
<dbReference type="NCBIfam" id="NF001381">
    <property type="entry name" value="PRK00279.1-3"/>
    <property type="match status" value="1"/>
</dbReference>
<dbReference type="NCBIfam" id="NF011100">
    <property type="entry name" value="PRK14527.1"/>
    <property type="match status" value="1"/>
</dbReference>
<dbReference type="PANTHER" id="PTHR23359">
    <property type="entry name" value="NUCLEOTIDE KINASE"/>
    <property type="match status" value="1"/>
</dbReference>
<dbReference type="Pfam" id="PF00406">
    <property type="entry name" value="ADK"/>
    <property type="match status" value="1"/>
</dbReference>
<dbReference type="Pfam" id="PF05191">
    <property type="entry name" value="ADK_lid"/>
    <property type="match status" value="1"/>
</dbReference>
<dbReference type="PRINTS" id="PR00094">
    <property type="entry name" value="ADENYLTKNASE"/>
</dbReference>
<dbReference type="SUPFAM" id="SSF52540">
    <property type="entry name" value="P-loop containing nucleoside triphosphate hydrolases"/>
    <property type="match status" value="1"/>
</dbReference>
<dbReference type="PROSITE" id="PS00113">
    <property type="entry name" value="ADENYLATE_KINASE"/>
    <property type="match status" value="1"/>
</dbReference>
<protein>
    <recommendedName>
        <fullName evidence="1">Adenylate kinase</fullName>
        <shortName evidence="1">AK</shortName>
        <ecNumber evidence="1">2.7.4.3</ecNumber>
    </recommendedName>
    <alternativeName>
        <fullName evidence="1">ATP-AMP transphosphorylase</fullName>
    </alternativeName>
    <alternativeName>
        <fullName evidence="1">ATP:AMP phosphotransferase</fullName>
    </alternativeName>
    <alternativeName>
        <fullName evidence="1">Adenylate monophosphate kinase</fullName>
    </alternativeName>
</protein>
<reference key="1">
    <citation type="submission" date="2007-04" db="EMBL/GenBank/DDBJ databases">
        <title>Complete sequence of Shewanella putrefaciens CN-32.</title>
        <authorList>
            <consortium name="US DOE Joint Genome Institute"/>
            <person name="Copeland A."/>
            <person name="Lucas S."/>
            <person name="Lapidus A."/>
            <person name="Barry K."/>
            <person name="Detter J.C."/>
            <person name="Glavina del Rio T."/>
            <person name="Hammon N."/>
            <person name="Israni S."/>
            <person name="Dalin E."/>
            <person name="Tice H."/>
            <person name="Pitluck S."/>
            <person name="Chain P."/>
            <person name="Malfatti S."/>
            <person name="Shin M."/>
            <person name="Vergez L."/>
            <person name="Schmutz J."/>
            <person name="Larimer F."/>
            <person name="Land M."/>
            <person name="Hauser L."/>
            <person name="Kyrpides N."/>
            <person name="Mikhailova N."/>
            <person name="Romine M.F."/>
            <person name="Fredrickson J."/>
            <person name="Tiedje J."/>
            <person name="Richardson P."/>
        </authorList>
    </citation>
    <scope>NUCLEOTIDE SEQUENCE [LARGE SCALE GENOMIC DNA]</scope>
    <source>
        <strain>CN-32 / ATCC BAA-453</strain>
    </source>
</reference>
<gene>
    <name evidence="1" type="primary">adk</name>
    <name type="ordered locus">Sputcn32_2297</name>
</gene>
<proteinExistence type="inferred from homology"/>
<comment type="function">
    <text evidence="1">Catalyzes the reversible transfer of the terminal phosphate group between ATP and AMP. Plays an important role in cellular energy homeostasis and in adenine nucleotide metabolism.</text>
</comment>
<comment type="catalytic activity">
    <reaction evidence="1">
        <text>AMP + ATP = 2 ADP</text>
        <dbReference type="Rhea" id="RHEA:12973"/>
        <dbReference type="ChEBI" id="CHEBI:30616"/>
        <dbReference type="ChEBI" id="CHEBI:456215"/>
        <dbReference type="ChEBI" id="CHEBI:456216"/>
        <dbReference type="EC" id="2.7.4.3"/>
    </reaction>
</comment>
<comment type="pathway">
    <text evidence="1">Purine metabolism; AMP biosynthesis via salvage pathway; AMP from ADP: step 1/1.</text>
</comment>
<comment type="subunit">
    <text evidence="1">Monomer.</text>
</comment>
<comment type="subcellular location">
    <subcellularLocation>
        <location evidence="1">Cytoplasm</location>
    </subcellularLocation>
</comment>
<comment type="domain">
    <text evidence="1">Consists of three domains, a large central CORE domain and two small peripheral domains, NMPbind and LID, which undergo movements during catalysis. The LID domain closes over the site of phosphoryl transfer upon ATP binding. Assembling and dissambling the active center during each catalytic cycle provides an effective means to prevent ATP hydrolysis.</text>
</comment>
<comment type="similarity">
    <text evidence="1">Belongs to the adenylate kinase family.</text>
</comment>
<evidence type="ECO:0000255" key="1">
    <source>
        <dbReference type="HAMAP-Rule" id="MF_00235"/>
    </source>
</evidence>
<feature type="chain" id="PRO_1000058899" description="Adenylate kinase">
    <location>
        <begin position="1"/>
        <end position="214"/>
    </location>
</feature>
<feature type="region of interest" description="NMP" evidence="1">
    <location>
        <begin position="30"/>
        <end position="59"/>
    </location>
</feature>
<feature type="region of interest" description="LID" evidence="1">
    <location>
        <begin position="122"/>
        <end position="159"/>
    </location>
</feature>
<feature type="binding site" evidence="1">
    <location>
        <begin position="10"/>
        <end position="15"/>
    </location>
    <ligand>
        <name>ATP</name>
        <dbReference type="ChEBI" id="CHEBI:30616"/>
    </ligand>
</feature>
<feature type="binding site" evidence="1">
    <location>
        <position position="31"/>
    </location>
    <ligand>
        <name>AMP</name>
        <dbReference type="ChEBI" id="CHEBI:456215"/>
    </ligand>
</feature>
<feature type="binding site" evidence="1">
    <location>
        <position position="36"/>
    </location>
    <ligand>
        <name>AMP</name>
        <dbReference type="ChEBI" id="CHEBI:456215"/>
    </ligand>
</feature>
<feature type="binding site" evidence="1">
    <location>
        <begin position="57"/>
        <end position="59"/>
    </location>
    <ligand>
        <name>AMP</name>
        <dbReference type="ChEBI" id="CHEBI:456215"/>
    </ligand>
</feature>
<feature type="binding site" evidence="1">
    <location>
        <begin position="85"/>
        <end position="88"/>
    </location>
    <ligand>
        <name>AMP</name>
        <dbReference type="ChEBI" id="CHEBI:456215"/>
    </ligand>
</feature>
<feature type="binding site" evidence="1">
    <location>
        <position position="92"/>
    </location>
    <ligand>
        <name>AMP</name>
        <dbReference type="ChEBI" id="CHEBI:456215"/>
    </ligand>
</feature>
<feature type="binding site" evidence="1">
    <location>
        <position position="123"/>
    </location>
    <ligand>
        <name>ATP</name>
        <dbReference type="ChEBI" id="CHEBI:30616"/>
    </ligand>
</feature>
<feature type="binding site" evidence="1">
    <location>
        <begin position="132"/>
        <end position="133"/>
    </location>
    <ligand>
        <name>ATP</name>
        <dbReference type="ChEBI" id="CHEBI:30616"/>
    </ligand>
</feature>
<feature type="binding site" evidence="1">
    <location>
        <position position="156"/>
    </location>
    <ligand>
        <name>AMP</name>
        <dbReference type="ChEBI" id="CHEBI:456215"/>
    </ligand>
</feature>
<feature type="binding site" evidence="1">
    <location>
        <position position="167"/>
    </location>
    <ligand>
        <name>AMP</name>
        <dbReference type="ChEBI" id="CHEBI:456215"/>
    </ligand>
</feature>
<feature type="binding site" evidence="1">
    <location>
        <position position="200"/>
    </location>
    <ligand>
        <name>ATP</name>
        <dbReference type="ChEBI" id="CHEBI:30616"/>
    </ligand>
</feature>